<gene>
    <name evidence="1" type="primary">pdxH</name>
    <name type="ordered locus">Rpal_1389</name>
</gene>
<accession>B3QIK5</accession>
<comment type="function">
    <text evidence="1">Catalyzes the oxidation of either pyridoxine 5'-phosphate (PNP) or pyridoxamine 5'-phosphate (PMP) into pyridoxal 5'-phosphate (PLP).</text>
</comment>
<comment type="catalytic activity">
    <reaction evidence="1">
        <text>pyridoxamine 5'-phosphate + O2 + H2O = pyridoxal 5'-phosphate + H2O2 + NH4(+)</text>
        <dbReference type="Rhea" id="RHEA:15817"/>
        <dbReference type="ChEBI" id="CHEBI:15377"/>
        <dbReference type="ChEBI" id="CHEBI:15379"/>
        <dbReference type="ChEBI" id="CHEBI:16240"/>
        <dbReference type="ChEBI" id="CHEBI:28938"/>
        <dbReference type="ChEBI" id="CHEBI:58451"/>
        <dbReference type="ChEBI" id="CHEBI:597326"/>
        <dbReference type="EC" id="1.4.3.5"/>
    </reaction>
</comment>
<comment type="catalytic activity">
    <reaction evidence="1">
        <text>pyridoxine 5'-phosphate + O2 = pyridoxal 5'-phosphate + H2O2</text>
        <dbReference type="Rhea" id="RHEA:15149"/>
        <dbReference type="ChEBI" id="CHEBI:15379"/>
        <dbReference type="ChEBI" id="CHEBI:16240"/>
        <dbReference type="ChEBI" id="CHEBI:58589"/>
        <dbReference type="ChEBI" id="CHEBI:597326"/>
        <dbReference type="EC" id="1.4.3.5"/>
    </reaction>
</comment>
<comment type="cofactor">
    <cofactor evidence="1">
        <name>FMN</name>
        <dbReference type="ChEBI" id="CHEBI:58210"/>
    </cofactor>
    <text evidence="1">Binds 1 FMN per subunit.</text>
</comment>
<comment type="pathway">
    <text evidence="1">Cofactor metabolism; pyridoxal 5'-phosphate salvage; pyridoxal 5'-phosphate from pyridoxamine 5'-phosphate: step 1/1.</text>
</comment>
<comment type="pathway">
    <text evidence="1">Cofactor metabolism; pyridoxal 5'-phosphate salvage; pyridoxal 5'-phosphate from pyridoxine 5'-phosphate: step 1/1.</text>
</comment>
<comment type="subunit">
    <text evidence="1">Homodimer.</text>
</comment>
<comment type="similarity">
    <text evidence="1">Belongs to the pyridoxamine 5'-phosphate oxidase family.</text>
</comment>
<sequence>MSDPTIRPQSELTPGDFTAAENPFALFAEWLAEANKSEPNDPNAMALATVDPDGLPDVRMVLMKGYDEHGFVFYSHIASQKGRELAANPKAALLFHWKSLRRQIRIRGTVTPVTDTEADAYFATRPKQAQIGAWASKQSQPLESRFAFEQAIAKVTARHLIGDVPRPPGWSGWRITPSRIEFWHDRPFRLHDRIEFRRDTPDHPWTKTRLYP</sequence>
<evidence type="ECO:0000255" key="1">
    <source>
        <dbReference type="HAMAP-Rule" id="MF_01629"/>
    </source>
</evidence>
<proteinExistence type="inferred from homology"/>
<name>PDXH_RHOPT</name>
<feature type="chain" id="PRO_1000186331" description="Pyridoxine/pyridoxamine 5'-phosphate oxidase">
    <location>
        <begin position="1"/>
        <end position="212"/>
    </location>
</feature>
<feature type="binding site" evidence="1">
    <location>
        <begin position="59"/>
        <end position="64"/>
    </location>
    <ligand>
        <name>FMN</name>
        <dbReference type="ChEBI" id="CHEBI:58210"/>
    </ligand>
</feature>
<feature type="binding site" evidence="1">
    <location>
        <position position="64"/>
    </location>
    <ligand>
        <name>substrate</name>
    </ligand>
</feature>
<feature type="binding site" evidence="1">
    <location>
        <begin position="74"/>
        <end position="75"/>
    </location>
    <ligand>
        <name>FMN</name>
        <dbReference type="ChEBI" id="CHEBI:58210"/>
    </ligand>
</feature>
<feature type="binding site" evidence="1">
    <location>
        <position position="81"/>
    </location>
    <ligand>
        <name>FMN</name>
        <dbReference type="ChEBI" id="CHEBI:58210"/>
    </ligand>
</feature>
<feature type="binding site" evidence="1">
    <location>
        <position position="103"/>
    </location>
    <ligand>
        <name>FMN</name>
        <dbReference type="ChEBI" id="CHEBI:58210"/>
    </ligand>
</feature>
<feature type="binding site" evidence="1">
    <location>
        <position position="121"/>
    </location>
    <ligand>
        <name>substrate</name>
    </ligand>
</feature>
<feature type="binding site" evidence="1">
    <location>
        <position position="125"/>
    </location>
    <ligand>
        <name>substrate</name>
    </ligand>
</feature>
<feature type="binding site" evidence="1">
    <location>
        <begin position="138"/>
        <end position="139"/>
    </location>
    <ligand>
        <name>FMN</name>
        <dbReference type="ChEBI" id="CHEBI:58210"/>
    </ligand>
</feature>
<feature type="binding site" evidence="1">
    <location>
        <position position="183"/>
    </location>
    <ligand>
        <name>FMN</name>
        <dbReference type="ChEBI" id="CHEBI:58210"/>
    </ligand>
</feature>
<feature type="binding site" evidence="1">
    <location>
        <begin position="189"/>
        <end position="191"/>
    </location>
    <ligand>
        <name>substrate</name>
    </ligand>
</feature>
<feature type="binding site" evidence="1">
    <location>
        <position position="193"/>
    </location>
    <ligand>
        <name>FMN</name>
        <dbReference type="ChEBI" id="CHEBI:58210"/>
    </ligand>
</feature>
<organism>
    <name type="scientific">Rhodopseudomonas palustris (strain TIE-1)</name>
    <dbReference type="NCBI Taxonomy" id="395960"/>
    <lineage>
        <taxon>Bacteria</taxon>
        <taxon>Pseudomonadati</taxon>
        <taxon>Pseudomonadota</taxon>
        <taxon>Alphaproteobacteria</taxon>
        <taxon>Hyphomicrobiales</taxon>
        <taxon>Nitrobacteraceae</taxon>
        <taxon>Rhodopseudomonas</taxon>
    </lineage>
</organism>
<reference key="1">
    <citation type="submission" date="2008-05" db="EMBL/GenBank/DDBJ databases">
        <title>Complete sequence of Rhodopseudomonas palustris TIE-1.</title>
        <authorList>
            <consortium name="US DOE Joint Genome Institute"/>
            <person name="Lucas S."/>
            <person name="Copeland A."/>
            <person name="Lapidus A."/>
            <person name="Glavina del Rio T."/>
            <person name="Dalin E."/>
            <person name="Tice H."/>
            <person name="Pitluck S."/>
            <person name="Chain P."/>
            <person name="Malfatti S."/>
            <person name="Shin M."/>
            <person name="Vergez L."/>
            <person name="Lang D."/>
            <person name="Schmutz J."/>
            <person name="Larimer F."/>
            <person name="Land M."/>
            <person name="Hauser L."/>
            <person name="Kyrpides N."/>
            <person name="Mikhailova N."/>
            <person name="Emerson D."/>
            <person name="Newman D.K."/>
            <person name="Roden E."/>
            <person name="Richardson P."/>
        </authorList>
    </citation>
    <scope>NUCLEOTIDE SEQUENCE [LARGE SCALE GENOMIC DNA]</scope>
    <source>
        <strain>TIE-1</strain>
    </source>
</reference>
<dbReference type="EC" id="1.4.3.5" evidence="1"/>
<dbReference type="EMBL" id="CP001096">
    <property type="protein sequence ID" value="ACE99928.1"/>
    <property type="molecule type" value="Genomic_DNA"/>
</dbReference>
<dbReference type="RefSeq" id="WP_011156760.1">
    <property type="nucleotide sequence ID" value="NC_011004.1"/>
</dbReference>
<dbReference type="SMR" id="B3QIK5"/>
<dbReference type="GeneID" id="66892219"/>
<dbReference type="KEGG" id="rpt:Rpal_1389"/>
<dbReference type="HOGENOM" id="CLU_032263_2_3_5"/>
<dbReference type="OrthoDB" id="9780392at2"/>
<dbReference type="UniPathway" id="UPA01068">
    <property type="reaction ID" value="UER00304"/>
</dbReference>
<dbReference type="UniPathway" id="UPA01068">
    <property type="reaction ID" value="UER00305"/>
</dbReference>
<dbReference type="Proteomes" id="UP000001725">
    <property type="component" value="Chromosome"/>
</dbReference>
<dbReference type="GO" id="GO:0010181">
    <property type="term" value="F:FMN binding"/>
    <property type="evidence" value="ECO:0007669"/>
    <property type="project" value="UniProtKB-UniRule"/>
</dbReference>
<dbReference type="GO" id="GO:0004733">
    <property type="term" value="F:pyridoxamine phosphate oxidase activity"/>
    <property type="evidence" value="ECO:0007669"/>
    <property type="project" value="UniProtKB-UniRule"/>
</dbReference>
<dbReference type="GO" id="GO:0008615">
    <property type="term" value="P:pyridoxine biosynthetic process"/>
    <property type="evidence" value="ECO:0007669"/>
    <property type="project" value="UniProtKB-KW"/>
</dbReference>
<dbReference type="FunFam" id="2.30.110.10:FF:000012">
    <property type="entry name" value="Predicted protein"/>
    <property type="match status" value="1"/>
</dbReference>
<dbReference type="Gene3D" id="2.30.110.10">
    <property type="entry name" value="Electron Transport, Fmn-binding Protein, Chain A"/>
    <property type="match status" value="1"/>
</dbReference>
<dbReference type="HAMAP" id="MF_01629">
    <property type="entry name" value="PdxH"/>
    <property type="match status" value="1"/>
</dbReference>
<dbReference type="InterPro" id="IPR000659">
    <property type="entry name" value="Pyridox_Oxase"/>
</dbReference>
<dbReference type="InterPro" id="IPR019740">
    <property type="entry name" value="Pyridox_Oxase_CS"/>
</dbReference>
<dbReference type="InterPro" id="IPR011576">
    <property type="entry name" value="Pyridox_Oxase_N"/>
</dbReference>
<dbReference type="InterPro" id="IPR019576">
    <property type="entry name" value="Pyridoxamine_oxidase_dimer_C"/>
</dbReference>
<dbReference type="InterPro" id="IPR012349">
    <property type="entry name" value="Split_barrel_FMN-bd"/>
</dbReference>
<dbReference type="NCBIfam" id="TIGR00558">
    <property type="entry name" value="pdxH"/>
    <property type="match status" value="1"/>
</dbReference>
<dbReference type="NCBIfam" id="NF004231">
    <property type="entry name" value="PRK05679.1"/>
    <property type="match status" value="1"/>
</dbReference>
<dbReference type="PANTHER" id="PTHR10851:SF0">
    <property type="entry name" value="PYRIDOXINE-5'-PHOSPHATE OXIDASE"/>
    <property type="match status" value="1"/>
</dbReference>
<dbReference type="PANTHER" id="PTHR10851">
    <property type="entry name" value="PYRIDOXINE-5-PHOSPHATE OXIDASE"/>
    <property type="match status" value="1"/>
</dbReference>
<dbReference type="Pfam" id="PF10590">
    <property type="entry name" value="PNP_phzG_C"/>
    <property type="match status" value="1"/>
</dbReference>
<dbReference type="Pfam" id="PF01243">
    <property type="entry name" value="PNPOx_N"/>
    <property type="match status" value="1"/>
</dbReference>
<dbReference type="PIRSF" id="PIRSF000190">
    <property type="entry name" value="Pyd_amn-ph_oxd"/>
    <property type="match status" value="1"/>
</dbReference>
<dbReference type="SUPFAM" id="SSF50475">
    <property type="entry name" value="FMN-binding split barrel"/>
    <property type="match status" value="1"/>
</dbReference>
<dbReference type="PROSITE" id="PS01064">
    <property type="entry name" value="PYRIDOX_OXIDASE"/>
    <property type="match status" value="1"/>
</dbReference>
<keyword id="KW-0285">Flavoprotein</keyword>
<keyword id="KW-0288">FMN</keyword>
<keyword id="KW-0560">Oxidoreductase</keyword>
<keyword id="KW-0664">Pyridoxine biosynthesis</keyword>
<protein>
    <recommendedName>
        <fullName evidence="1">Pyridoxine/pyridoxamine 5'-phosphate oxidase</fullName>
        <ecNumber evidence="1">1.4.3.5</ecNumber>
    </recommendedName>
    <alternativeName>
        <fullName evidence="1">PNP/PMP oxidase</fullName>
        <shortName evidence="1">PNPOx</shortName>
    </alternativeName>
    <alternativeName>
        <fullName evidence="1">Pyridoxal 5'-phosphate synthase</fullName>
    </alternativeName>
</protein>